<feature type="chain" id="PRO_0000218406" description="Uncharacterized protein TC_0825">
    <location>
        <begin position="1"/>
        <end position="238"/>
    </location>
</feature>
<proteinExistence type="inferred from homology"/>
<reference key="1">
    <citation type="journal article" date="2000" name="Nucleic Acids Res.">
        <title>Genome sequences of Chlamydia trachomatis MoPn and Chlamydia pneumoniae AR39.</title>
        <authorList>
            <person name="Read T.D."/>
            <person name="Brunham R.C."/>
            <person name="Shen C."/>
            <person name="Gill S.R."/>
            <person name="Heidelberg J.F."/>
            <person name="White O."/>
            <person name="Hickey E.K."/>
            <person name="Peterson J.D."/>
            <person name="Utterback T.R."/>
            <person name="Berry K.J."/>
            <person name="Bass S."/>
            <person name="Linher K.D."/>
            <person name="Weidman J.F."/>
            <person name="Khouri H.M."/>
            <person name="Craven B."/>
            <person name="Bowman C."/>
            <person name="Dodson R.J."/>
            <person name="Gwinn M.L."/>
            <person name="Nelson W.C."/>
            <person name="DeBoy R.T."/>
            <person name="Kolonay J.F."/>
            <person name="McClarty G."/>
            <person name="Salzberg S.L."/>
            <person name="Eisen J.A."/>
            <person name="Fraser C.M."/>
        </authorList>
    </citation>
    <scope>NUCLEOTIDE SEQUENCE [LARGE SCALE GENOMIC DNA]</scope>
    <source>
        <strain>MoPn / Nigg</strain>
    </source>
</reference>
<protein>
    <recommendedName>
        <fullName>Uncharacterized protein TC_0825</fullName>
    </recommendedName>
</protein>
<dbReference type="EMBL" id="AE002160">
    <property type="protein sequence ID" value="AAF39626.1"/>
    <property type="molecule type" value="Genomic_DNA"/>
</dbReference>
<dbReference type="PIR" id="B81660">
    <property type="entry name" value="B81660"/>
</dbReference>
<dbReference type="RefSeq" id="WP_010231691.1">
    <property type="nucleotide sequence ID" value="NZ_CP063055.1"/>
</dbReference>
<dbReference type="GeneID" id="1246192"/>
<dbReference type="KEGG" id="cmu:TC_0825"/>
<dbReference type="eggNOG" id="ENOG502ZAKZ">
    <property type="taxonomic scope" value="Bacteria"/>
</dbReference>
<dbReference type="HOGENOM" id="CLU_1164241_0_0_0"/>
<dbReference type="OrthoDB" id="20318at2"/>
<dbReference type="Proteomes" id="UP000000800">
    <property type="component" value="Chromosome"/>
</dbReference>
<dbReference type="InterPro" id="IPR024484">
    <property type="entry name" value="DUF2709"/>
</dbReference>
<dbReference type="Pfam" id="PF10915">
    <property type="entry name" value="DUF2709"/>
    <property type="match status" value="1"/>
</dbReference>
<organism>
    <name type="scientific">Chlamydia muridarum (strain MoPn / Nigg)</name>
    <dbReference type="NCBI Taxonomy" id="243161"/>
    <lineage>
        <taxon>Bacteria</taxon>
        <taxon>Pseudomonadati</taxon>
        <taxon>Chlamydiota</taxon>
        <taxon>Chlamydiia</taxon>
        <taxon>Chlamydiales</taxon>
        <taxon>Chlamydiaceae</taxon>
        <taxon>Chlamydia/Chlamydophila group</taxon>
        <taxon>Chlamydia</taxon>
    </lineage>
</organism>
<comment type="similarity">
    <text evidence="1">Belongs to the chlamydial CPn_0658/CT_538/TC_0825 family.</text>
</comment>
<accession>Q9PJK4</accession>
<sequence length="238" mass="27303">MNISGSIKQKLLQFLKKQKSPELLATYLFYLEQSLHLSPVVFVRDKVIFKSAEDAIALLEADKKIWRETEIQISSGKPEVNEQTKRIYICPFTGKVFADNVYANPLDAVYDWLSSCPQNKERQAGVAVKRFLVSDDPEVIRAYIVPPKEPLIKTVYASAITGKLFHSLPTLLEDFKTSYLRPMTLEEVQNQNKFQLESSFLTLLQDALEEEKIAEFVESLADDTAFHEYISQWVDTEE</sequence>
<evidence type="ECO:0000305" key="1"/>
<gene>
    <name type="ordered locus">TC_0825</name>
</gene>
<name>Y825_CHLMU</name>